<proteinExistence type="inferred from homology"/>
<dbReference type="EMBL" id="CP000503">
    <property type="protein sequence ID" value="ABM26231.1"/>
    <property type="molecule type" value="Genomic_DNA"/>
</dbReference>
<dbReference type="RefSeq" id="WP_011790674.1">
    <property type="nucleotide sequence ID" value="NC_008750.1"/>
</dbReference>
<dbReference type="SMR" id="A1RNI6"/>
<dbReference type="GeneID" id="67442214"/>
<dbReference type="KEGG" id="shw:Sputw3181_3419"/>
<dbReference type="HOGENOM" id="CLU_078938_4_1_6"/>
<dbReference type="Proteomes" id="UP000002597">
    <property type="component" value="Chromosome"/>
</dbReference>
<dbReference type="GO" id="GO:1990904">
    <property type="term" value="C:ribonucleoprotein complex"/>
    <property type="evidence" value="ECO:0007669"/>
    <property type="project" value="UniProtKB-KW"/>
</dbReference>
<dbReference type="GO" id="GO:0005840">
    <property type="term" value="C:ribosome"/>
    <property type="evidence" value="ECO:0007669"/>
    <property type="project" value="UniProtKB-KW"/>
</dbReference>
<dbReference type="GO" id="GO:0019843">
    <property type="term" value="F:rRNA binding"/>
    <property type="evidence" value="ECO:0007669"/>
    <property type="project" value="UniProtKB-UniRule"/>
</dbReference>
<dbReference type="GO" id="GO:0003735">
    <property type="term" value="F:structural constituent of ribosome"/>
    <property type="evidence" value="ECO:0007669"/>
    <property type="project" value="InterPro"/>
</dbReference>
<dbReference type="GO" id="GO:0006412">
    <property type="term" value="P:translation"/>
    <property type="evidence" value="ECO:0007669"/>
    <property type="project" value="UniProtKB-UniRule"/>
</dbReference>
<dbReference type="FunFam" id="3.10.430.100:FF:000001">
    <property type="entry name" value="50S ribosomal protein L9"/>
    <property type="match status" value="1"/>
</dbReference>
<dbReference type="FunFam" id="3.40.5.10:FF:000001">
    <property type="entry name" value="50S ribosomal protein L9"/>
    <property type="match status" value="1"/>
</dbReference>
<dbReference type="Gene3D" id="3.10.430.100">
    <property type="entry name" value="Ribosomal protein L9, C-terminal domain"/>
    <property type="match status" value="1"/>
</dbReference>
<dbReference type="Gene3D" id="3.40.5.10">
    <property type="entry name" value="Ribosomal protein L9, N-terminal domain"/>
    <property type="match status" value="1"/>
</dbReference>
<dbReference type="HAMAP" id="MF_00503">
    <property type="entry name" value="Ribosomal_bL9"/>
    <property type="match status" value="1"/>
</dbReference>
<dbReference type="InterPro" id="IPR000244">
    <property type="entry name" value="Ribosomal_bL9"/>
</dbReference>
<dbReference type="InterPro" id="IPR009027">
    <property type="entry name" value="Ribosomal_bL9/RNase_H1_N"/>
</dbReference>
<dbReference type="InterPro" id="IPR020594">
    <property type="entry name" value="Ribosomal_bL9_bac/chp"/>
</dbReference>
<dbReference type="InterPro" id="IPR020069">
    <property type="entry name" value="Ribosomal_bL9_C"/>
</dbReference>
<dbReference type="InterPro" id="IPR036791">
    <property type="entry name" value="Ribosomal_bL9_C_sf"/>
</dbReference>
<dbReference type="InterPro" id="IPR020070">
    <property type="entry name" value="Ribosomal_bL9_N"/>
</dbReference>
<dbReference type="InterPro" id="IPR036935">
    <property type="entry name" value="Ribosomal_bL9_N_sf"/>
</dbReference>
<dbReference type="NCBIfam" id="TIGR00158">
    <property type="entry name" value="L9"/>
    <property type="match status" value="1"/>
</dbReference>
<dbReference type="PANTHER" id="PTHR21368">
    <property type="entry name" value="50S RIBOSOMAL PROTEIN L9"/>
    <property type="match status" value="1"/>
</dbReference>
<dbReference type="Pfam" id="PF03948">
    <property type="entry name" value="Ribosomal_L9_C"/>
    <property type="match status" value="1"/>
</dbReference>
<dbReference type="Pfam" id="PF01281">
    <property type="entry name" value="Ribosomal_L9_N"/>
    <property type="match status" value="1"/>
</dbReference>
<dbReference type="SUPFAM" id="SSF55658">
    <property type="entry name" value="L9 N-domain-like"/>
    <property type="match status" value="1"/>
</dbReference>
<dbReference type="SUPFAM" id="SSF55653">
    <property type="entry name" value="Ribosomal protein L9 C-domain"/>
    <property type="match status" value="1"/>
</dbReference>
<dbReference type="PROSITE" id="PS00651">
    <property type="entry name" value="RIBOSOMAL_L9"/>
    <property type="match status" value="1"/>
</dbReference>
<name>RL9_SHESW</name>
<protein>
    <recommendedName>
        <fullName evidence="1">Large ribosomal subunit protein bL9</fullName>
    </recommendedName>
    <alternativeName>
        <fullName evidence="2">50S ribosomal protein L9</fullName>
    </alternativeName>
</protein>
<sequence>MNVILLDKIANLGNLGDQVVVKAGYARNYLLPQGKAVVANESNVKVFEARRAELEAKLAAELAAANQRAEKITALEAVVIASKAGDEGKLFGSVGNRDIADAVTAAGVELAKSEVRLPLGALRTTGDFEVEVQLHTEVKAVVKVSIVAEA</sequence>
<accession>A1RNI6</accession>
<reference key="1">
    <citation type="submission" date="2006-12" db="EMBL/GenBank/DDBJ databases">
        <title>Complete sequence of Shewanella sp. W3-18-1.</title>
        <authorList>
            <consortium name="US DOE Joint Genome Institute"/>
            <person name="Copeland A."/>
            <person name="Lucas S."/>
            <person name="Lapidus A."/>
            <person name="Barry K."/>
            <person name="Detter J.C."/>
            <person name="Glavina del Rio T."/>
            <person name="Hammon N."/>
            <person name="Israni S."/>
            <person name="Dalin E."/>
            <person name="Tice H."/>
            <person name="Pitluck S."/>
            <person name="Chain P."/>
            <person name="Malfatti S."/>
            <person name="Shin M."/>
            <person name="Vergez L."/>
            <person name="Schmutz J."/>
            <person name="Larimer F."/>
            <person name="Land M."/>
            <person name="Hauser L."/>
            <person name="Kyrpides N."/>
            <person name="Lykidis A."/>
            <person name="Tiedje J."/>
            <person name="Richardson P."/>
        </authorList>
    </citation>
    <scope>NUCLEOTIDE SEQUENCE [LARGE SCALE GENOMIC DNA]</scope>
    <source>
        <strain>W3-18-1</strain>
    </source>
</reference>
<organism>
    <name type="scientific">Shewanella sp. (strain W3-18-1)</name>
    <dbReference type="NCBI Taxonomy" id="351745"/>
    <lineage>
        <taxon>Bacteria</taxon>
        <taxon>Pseudomonadati</taxon>
        <taxon>Pseudomonadota</taxon>
        <taxon>Gammaproteobacteria</taxon>
        <taxon>Alteromonadales</taxon>
        <taxon>Shewanellaceae</taxon>
        <taxon>Shewanella</taxon>
    </lineage>
</organism>
<comment type="function">
    <text evidence="1">Binds to the 23S rRNA.</text>
</comment>
<comment type="similarity">
    <text evidence="1">Belongs to the bacterial ribosomal protein bL9 family.</text>
</comment>
<evidence type="ECO:0000255" key="1">
    <source>
        <dbReference type="HAMAP-Rule" id="MF_00503"/>
    </source>
</evidence>
<evidence type="ECO:0000305" key="2"/>
<gene>
    <name evidence="1" type="primary">rplI</name>
    <name type="ordered locus">Sputw3181_3419</name>
</gene>
<keyword id="KW-0687">Ribonucleoprotein</keyword>
<keyword id="KW-0689">Ribosomal protein</keyword>
<keyword id="KW-0694">RNA-binding</keyword>
<keyword id="KW-0699">rRNA-binding</keyword>
<feature type="chain" id="PRO_1000014864" description="Large ribosomal subunit protein bL9">
    <location>
        <begin position="1"/>
        <end position="150"/>
    </location>
</feature>